<dbReference type="EC" id="2.1.2.9" evidence="1"/>
<dbReference type="EMBL" id="AE015927">
    <property type="protein sequence ID" value="AAO35789.1"/>
    <property type="molecule type" value="Genomic_DNA"/>
</dbReference>
<dbReference type="SMR" id="Q895Q1"/>
<dbReference type="STRING" id="212717.CTC_01220"/>
<dbReference type="KEGG" id="ctc:CTC_01220"/>
<dbReference type="HOGENOM" id="CLU_033347_1_1_9"/>
<dbReference type="Proteomes" id="UP000001412">
    <property type="component" value="Chromosome"/>
</dbReference>
<dbReference type="GO" id="GO:0005829">
    <property type="term" value="C:cytosol"/>
    <property type="evidence" value="ECO:0007669"/>
    <property type="project" value="TreeGrafter"/>
</dbReference>
<dbReference type="GO" id="GO:0004479">
    <property type="term" value="F:methionyl-tRNA formyltransferase activity"/>
    <property type="evidence" value="ECO:0007669"/>
    <property type="project" value="UniProtKB-UniRule"/>
</dbReference>
<dbReference type="CDD" id="cd08646">
    <property type="entry name" value="FMT_core_Met-tRNA-FMT_N"/>
    <property type="match status" value="1"/>
</dbReference>
<dbReference type="CDD" id="cd08704">
    <property type="entry name" value="Met_tRNA_FMT_C"/>
    <property type="match status" value="1"/>
</dbReference>
<dbReference type="FunFam" id="3.40.50.12230:FF:000001">
    <property type="entry name" value="Methionyl-tRNA formyltransferase"/>
    <property type="match status" value="1"/>
</dbReference>
<dbReference type="Gene3D" id="3.40.50.12230">
    <property type="match status" value="1"/>
</dbReference>
<dbReference type="HAMAP" id="MF_00182">
    <property type="entry name" value="Formyl_trans"/>
    <property type="match status" value="1"/>
</dbReference>
<dbReference type="InterPro" id="IPR005794">
    <property type="entry name" value="Fmt"/>
</dbReference>
<dbReference type="InterPro" id="IPR005793">
    <property type="entry name" value="Formyl_trans_C"/>
</dbReference>
<dbReference type="InterPro" id="IPR002376">
    <property type="entry name" value="Formyl_transf_N"/>
</dbReference>
<dbReference type="InterPro" id="IPR036477">
    <property type="entry name" value="Formyl_transf_N_sf"/>
</dbReference>
<dbReference type="InterPro" id="IPR011034">
    <property type="entry name" value="Formyl_transferase-like_C_sf"/>
</dbReference>
<dbReference type="InterPro" id="IPR001555">
    <property type="entry name" value="GART_AS"/>
</dbReference>
<dbReference type="InterPro" id="IPR044135">
    <property type="entry name" value="Met-tRNA-FMT_C"/>
</dbReference>
<dbReference type="InterPro" id="IPR041711">
    <property type="entry name" value="Met-tRNA-FMT_N"/>
</dbReference>
<dbReference type="NCBIfam" id="TIGR00460">
    <property type="entry name" value="fmt"/>
    <property type="match status" value="1"/>
</dbReference>
<dbReference type="PANTHER" id="PTHR11138">
    <property type="entry name" value="METHIONYL-TRNA FORMYLTRANSFERASE"/>
    <property type="match status" value="1"/>
</dbReference>
<dbReference type="PANTHER" id="PTHR11138:SF5">
    <property type="entry name" value="METHIONYL-TRNA FORMYLTRANSFERASE, MITOCHONDRIAL"/>
    <property type="match status" value="1"/>
</dbReference>
<dbReference type="Pfam" id="PF02911">
    <property type="entry name" value="Formyl_trans_C"/>
    <property type="match status" value="1"/>
</dbReference>
<dbReference type="Pfam" id="PF00551">
    <property type="entry name" value="Formyl_trans_N"/>
    <property type="match status" value="1"/>
</dbReference>
<dbReference type="SUPFAM" id="SSF50486">
    <property type="entry name" value="FMT C-terminal domain-like"/>
    <property type="match status" value="1"/>
</dbReference>
<dbReference type="SUPFAM" id="SSF53328">
    <property type="entry name" value="Formyltransferase"/>
    <property type="match status" value="1"/>
</dbReference>
<dbReference type="PROSITE" id="PS00373">
    <property type="entry name" value="GART"/>
    <property type="match status" value="1"/>
</dbReference>
<reference key="1">
    <citation type="journal article" date="2003" name="Proc. Natl. Acad. Sci. U.S.A.">
        <title>The genome sequence of Clostridium tetani, the causative agent of tetanus disease.</title>
        <authorList>
            <person name="Brueggemann H."/>
            <person name="Baeumer S."/>
            <person name="Fricke W.F."/>
            <person name="Wiezer A."/>
            <person name="Liesegang H."/>
            <person name="Decker I."/>
            <person name="Herzberg C."/>
            <person name="Martinez-Arias R."/>
            <person name="Merkl R."/>
            <person name="Henne A."/>
            <person name="Gottschalk G."/>
        </authorList>
    </citation>
    <scope>NUCLEOTIDE SEQUENCE [LARGE SCALE GENOMIC DNA]</scope>
    <source>
        <strain>Massachusetts / E88</strain>
    </source>
</reference>
<sequence length="310" mass="35098">MMKIVFMGTPEFAVPSLERLIKEFGVKAVFTQPDRPKGRGKKLSISPIKEVALRENIKILQPQKLRDDREAIEFLKKLSPDFIIVVAYGQILSKEILDIPKYGCINLHASLLPKYRGAAPINWAIINGEKFSGNTTMFMDVGLDTGDMLLKDEFKIEDNTTAGELHNKLMESGGELLVKTINGLVEDSIEPEKQKDEESCYASMLDKKMAKINWNLESEDIKNLIKGLNPWPLAYTYYKGTMMKIYEAEIIDKKEDFSPGFIIDVSKGGIKVATKDGILLLKKIQFPSKKPMYVEEYIRGNKIEKGIILE</sequence>
<gene>
    <name evidence="1" type="primary">fmt</name>
    <name type="ordered locus">CTC_01220</name>
</gene>
<organism>
    <name type="scientific">Clostridium tetani (strain Massachusetts / E88)</name>
    <dbReference type="NCBI Taxonomy" id="212717"/>
    <lineage>
        <taxon>Bacteria</taxon>
        <taxon>Bacillati</taxon>
        <taxon>Bacillota</taxon>
        <taxon>Clostridia</taxon>
        <taxon>Eubacteriales</taxon>
        <taxon>Clostridiaceae</taxon>
        <taxon>Clostridium</taxon>
    </lineage>
</organism>
<keyword id="KW-0648">Protein biosynthesis</keyword>
<keyword id="KW-1185">Reference proteome</keyword>
<keyword id="KW-0808">Transferase</keyword>
<evidence type="ECO:0000255" key="1">
    <source>
        <dbReference type="HAMAP-Rule" id="MF_00182"/>
    </source>
</evidence>
<comment type="function">
    <text evidence="1">Attaches a formyl group to the free amino group of methionyl-tRNA(fMet). The formyl group appears to play a dual role in the initiator identity of N-formylmethionyl-tRNA by promoting its recognition by IF2 and preventing the misappropriation of this tRNA by the elongation apparatus.</text>
</comment>
<comment type="catalytic activity">
    <reaction evidence="1">
        <text>L-methionyl-tRNA(fMet) + (6R)-10-formyltetrahydrofolate = N-formyl-L-methionyl-tRNA(fMet) + (6S)-5,6,7,8-tetrahydrofolate + H(+)</text>
        <dbReference type="Rhea" id="RHEA:24380"/>
        <dbReference type="Rhea" id="RHEA-COMP:9952"/>
        <dbReference type="Rhea" id="RHEA-COMP:9953"/>
        <dbReference type="ChEBI" id="CHEBI:15378"/>
        <dbReference type="ChEBI" id="CHEBI:57453"/>
        <dbReference type="ChEBI" id="CHEBI:78530"/>
        <dbReference type="ChEBI" id="CHEBI:78844"/>
        <dbReference type="ChEBI" id="CHEBI:195366"/>
        <dbReference type="EC" id="2.1.2.9"/>
    </reaction>
</comment>
<comment type="similarity">
    <text evidence="1">Belongs to the Fmt family.</text>
</comment>
<feature type="chain" id="PRO_0000082951" description="Methionyl-tRNA formyltransferase">
    <location>
        <begin position="1"/>
        <end position="310"/>
    </location>
</feature>
<feature type="binding site" evidence="1">
    <location>
        <begin position="110"/>
        <end position="113"/>
    </location>
    <ligand>
        <name>(6S)-5,6,7,8-tetrahydrofolate</name>
        <dbReference type="ChEBI" id="CHEBI:57453"/>
    </ligand>
</feature>
<accession>Q895Q1</accession>
<name>FMT_CLOTE</name>
<protein>
    <recommendedName>
        <fullName evidence="1">Methionyl-tRNA formyltransferase</fullName>
        <ecNumber evidence="1">2.1.2.9</ecNumber>
    </recommendedName>
</protein>
<proteinExistence type="inferred from homology"/>